<keyword id="KW-0002">3D-structure</keyword>
<keyword id="KW-1185">Reference proteome</keyword>
<keyword id="KW-0687">Ribonucleoprotein</keyword>
<keyword id="KW-0689">Ribosomal protein</keyword>
<keyword id="KW-0694">RNA-binding</keyword>
<keyword id="KW-0699">rRNA-binding</keyword>
<reference key="1">
    <citation type="journal article" date="1998" name="Nature">
        <title>Deciphering the biology of Mycobacterium tuberculosis from the complete genome sequence.</title>
        <authorList>
            <person name="Cole S.T."/>
            <person name="Brosch R."/>
            <person name="Parkhill J."/>
            <person name="Garnier T."/>
            <person name="Churcher C.M."/>
            <person name="Harris D.E."/>
            <person name="Gordon S.V."/>
            <person name="Eiglmeier K."/>
            <person name="Gas S."/>
            <person name="Barry C.E. III"/>
            <person name="Tekaia F."/>
            <person name="Badcock K."/>
            <person name="Basham D."/>
            <person name="Brown D."/>
            <person name="Chillingworth T."/>
            <person name="Connor R."/>
            <person name="Davies R.M."/>
            <person name="Devlin K."/>
            <person name="Feltwell T."/>
            <person name="Gentles S."/>
            <person name="Hamlin N."/>
            <person name="Holroyd S."/>
            <person name="Hornsby T."/>
            <person name="Jagels K."/>
            <person name="Krogh A."/>
            <person name="McLean J."/>
            <person name="Moule S."/>
            <person name="Murphy L.D."/>
            <person name="Oliver S."/>
            <person name="Osborne J."/>
            <person name="Quail M.A."/>
            <person name="Rajandream M.A."/>
            <person name="Rogers J."/>
            <person name="Rutter S."/>
            <person name="Seeger K."/>
            <person name="Skelton S."/>
            <person name="Squares S."/>
            <person name="Squares R."/>
            <person name="Sulston J.E."/>
            <person name="Taylor K."/>
            <person name="Whitehead S."/>
            <person name="Barrell B.G."/>
        </authorList>
    </citation>
    <scope>NUCLEOTIDE SEQUENCE [LARGE SCALE GENOMIC DNA]</scope>
    <source>
        <strain>ATCC 25618 / H37Rv</strain>
    </source>
</reference>
<reference key="2">
    <citation type="journal article" date="2008" name="BMC Syst. Biol.">
        <title>targetTB: a target identification pipeline for Mycobacterium tuberculosis through an interactome, reactome and genome-scale structural analysis.</title>
        <authorList>
            <person name="Raman K."/>
            <person name="Yeturu K."/>
            <person name="Chandra N."/>
        </authorList>
    </citation>
    <scope>IDENTIFICATION AS A DRUG TARGET [LARGE SCALE ANALYSIS]</scope>
</reference>
<reference key="3">
    <citation type="journal article" date="2011" name="Mol. Cell. Proteomics">
        <title>Proteogenomic analysis of Mycobacterium tuberculosis by high resolution mass spectrometry.</title>
        <authorList>
            <person name="Kelkar D.S."/>
            <person name="Kumar D."/>
            <person name="Kumar P."/>
            <person name="Balakrishnan L."/>
            <person name="Muthusamy B."/>
            <person name="Yadav A.K."/>
            <person name="Shrivastava P."/>
            <person name="Marimuthu A."/>
            <person name="Anand S."/>
            <person name="Sundaram H."/>
            <person name="Kingsbury R."/>
            <person name="Harsha H.C."/>
            <person name="Nair B."/>
            <person name="Prasad T.S."/>
            <person name="Chauhan D.S."/>
            <person name="Katoch K."/>
            <person name="Katoch V.M."/>
            <person name="Kumar P."/>
            <person name="Chaerkady R."/>
            <person name="Ramachandran S."/>
            <person name="Dash D."/>
            <person name="Pandey A."/>
        </authorList>
    </citation>
    <scope>IDENTIFICATION BY MASS SPECTROMETRY [LARGE SCALE ANALYSIS]</scope>
    <source>
        <strain>ATCC 25618 / H37Rv</strain>
    </source>
</reference>
<gene>
    <name evidence="1" type="primary">rpsQ</name>
    <name type="ordered locus">Rv0710</name>
    <name type="ORF">MTCY210.29</name>
</gene>
<organism>
    <name type="scientific">Mycobacterium tuberculosis (strain ATCC 25618 / H37Rv)</name>
    <dbReference type="NCBI Taxonomy" id="83332"/>
    <lineage>
        <taxon>Bacteria</taxon>
        <taxon>Bacillati</taxon>
        <taxon>Actinomycetota</taxon>
        <taxon>Actinomycetes</taxon>
        <taxon>Mycobacteriales</taxon>
        <taxon>Mycobacteriaceae</taxon>
        <taxon>Mycobacterium</taxon>
        <taxon>Mycobacterium tuberculosis complex</taxon>
    </lineage>
</organism>
<sequence length="135" mass="14741">MAEAKTGAKAAPRVAKAAKAAPKKAAPNDAEAIGAANAANVKGPKHTPRTPKPRGRRKTRIGYVVSDKMQKTIVVELEDRMRHPLYGKIIRTTKKVKAHDEDSVAGIGDRVSLMETRPLSATKRWRLVEILEKAK</sequence>
<protein>
    <recommendedName>
        <fullName evidence="1">Small ribosomal subunit protein uS17</fullName>
    </recommendedName>
    <alternativeName>
        <fullName evidence="3">30S ribosomal protein S17</fullName>
    </alternativeName>
</protein>
<dbReference type="EMBL" id="AL123456">
    <property type="protein sequence ID" value="CCP43454.1"/>
    <property type="status" value="ALT_INIT"/>
    <property type="molecule type" value="Genomic_DNA"/>
</dbReference>
<dbReference type="PIR" id="A70643">
    <property type="entry name" value="A70643"/>
</dbReference>
<dbReference type="RefSeq" id="NP_215224.1">
    <property type="nucleotide sequence ID" value="NC_000962.3"/>
</dbReference>
<dbReference type="PDB" id="5V93">
    <property type="method" value="EM"/>
    <property type="resolution" value="4.00 A"/>
    <property type="chains" value="q=1-135"/>
</dbReference>
<dbReference type="PDB" id="7KGB">
    <property type="method" value="EM"/>
    <property type="resolution" value="2.70 A"/>
    <property type="chains" value="q=1-135"/>
</dbReference>
<dbReference type="PDB" id="7MSC">
    <property type="method" value="EM"/>
    <property type="resolution" value="2.97 A"/>
    <property type="chains" value="q=1-135"/>
</dbReference>
<dbReference type="PDB" id="7MSH">
    <property type="method" value="EM"/>
    <property type="resolution" value="3.23 A"/>
    <property type="chains" value="q=1-135"/>
</dbReference>
<dbReference type="PDB" id="7MSM">
    <property type="method" value="EM"/>
    <property type="resolution" value="2.79 A"/>
    <property type="chains" value="q=1-135"/>
</dbReference>
<dbReference type="PDB" id="7MSZ">
    <property type="method" value="EM"/>
    <property type="resolution" value="3.10 A"/>
    <property type="chains" value="q=1-135"/>
</dbReference>
<dbReference type="PDB" id="7MT2">
    <property type="method" value="EM"/>
    <property type="resolution" value="2.76 A"/>
    <property type="chains" value="q=1-135"/>
</dbReference>
<dbReference type="PDB" id="7MT3">
    <property type="method" value="EM"/>
    <property type="resolution" value="2.80 A"/>
    <property type="chains" value="q=1-135"/>
</dbReference>
<dbReference type="PDB" id="7MT7">
    <property type="method" value="EM"/>
    <property type="resolution" value="2.71 A"/>
    <property type="chains" value="q=1-135"/>
</dbReference>
<dbReference type="PDB" id="7SFR">
    <property type="method" value="EM"/>
    <property type="resolution" value="2.60 A"/>
    <property type="chains" value="q=1-135"/>
</dbReference>
<dbReference type="PDBsum" id="5V93"/>
<dbReference type="PDBsum" id="7KGB"/>
<dbReference type="PDBsum" id="7MSC"/>
<dbReference type="PDBsum" id="7MSH"/>
<dbReference type="PDBsum" id="7MSM"/>
<dbReference type="PDBsum" id="7MSZ"/>
<dbReference type="PDBsum" id="7MT2"/>
<dbReference type="PDBsum" id="7MT3"/>
<dbReference type="PDBsum" id="7MT7"/>
<dbReference type="PDBsum" id="7SFR"/>
<dbReference type="EMDB" id="EMD-22865"/>
<dbReference type="EMDB" id="EMD-23961"/>
<dbReference type="EMDB" id="EMD-23962"/>
<dbReference type="EMDB" id="EMD-23969"/>
<dbReference type="EMDB" id="EMD-23972"/>
<dbReference type="EMDB" id="EMD-23974"/>
<dbReference type="EMDB" id="EMD-23975"/>
<dbReference type="EMDB" id="EMD-23976"/>
<dbReference type="EMDB" id="EMD-8645"/>
<dbReference type="SMR" id="P9WH51"/>
<dbReference type="FunCoup" id="P9WH51">
    <property type="interactions" value="100"/>
</dbReference>
<dbReference type="STRING" id="83332.Rv0710"/>
<dbReference type="PaxDb" id="83332-Rv0710"/>
<dbReference type="GeneID" id="888391"/>
<dbReference type="KEGG" id="mtu:Rv0710"/>
<dbReference type="PATRIC" id="fig|83332.12.peg.791"/>
<dbReference type="TubercuList" id="Rv0710"/>
<dbReference type="eggNOG" id="COG0186">
    <property type="taxonomic scope" value="Bacteria"/>
</dbReference>
<dbReference type="InParanoid" id="P9WH51"/>
<dbReference type="OrthoDB" id="9811714at2"/>
<dbReference type="PRO" id="PR:P9WH51"/>
<dbReference type="Proteomes" id="UP000001584">
    <property type="component" value="Chromosome"/>
</dbReference>
<dbReference type="GO" id="GO:0022627">
    <property type="term" value="C:cytosolic small ribosomal subunit"/>
    <property type="evidence" value="ECO:0000318"/>
    <property type="project" value="GO_Central"/>
</dbReference>
<dbReference type="GO" id="GO:0005886">
    <property type="term" value="C:plasma membrane"/>
    <property type="evidence" value="ECO:0007005"/>
    <property type="project" value="MTBBASE"/>
</dbReference>
<dbReference type="GO" id="GO:0019843">
    <property type="term" value="F:rRNA binding"/>
    <property type="evidence" value="ECO:0007669"/>
    <property type="project" value="UniProtKB-UniRule"/>
</dbReference>
<dbReference type="GO" id="GO:0003735">
    <property type="term" value="F:structural constituent of ribosome"/>
    <property type="evidence" value="ECO:0000318"/>
    <property type="project" value="GO_Central"/>
</dbReference>
<dbReference type="GO" id="GO:0006412">
    <property type="term" value="P:translation"/>
    <property type="evidence" value="ECO:0007669"/>
    <property type="project" value="UniProtKB-UniRule"/>
</dbReference>
<dbReference type="CDD" id="cd00364">
    <property type="entry name" value="Ribosomal_uS17"/>
    <property type="match status" value="1"/>
</dbReference>
<dbReference type="FunFam" id="2.40.50.140:FF:000026">
    <property type="entry name" value="30S ribosomal protein S17"/>
    <property type="match status" value="1"/>
</dbReference>
<dbReference type="Gene3D" id="2.40.50.140">
    <property type="entry name" value="Nucleic acid-binding proteins"/>
    <property type="match status" value="1"/>
</dbReference>
<dbReference type="HAMAP" id="MF_01345_B">
    <property type="entry name" value="Ribosomal_uS17_B"/>
    <property type="match status" value="1"/>
</dbReference>
<dbReference type="InterPro" id="IPR012340">
    <property type="entry name" value="NA-bd_OB-fold"/>
</dbReference>
<dbReference type="InterPro" id="IPR000266">
    <property type="entry name" value="Ribosomal_uS17"/>
</dbReference>
<dbReference type="InterPro" id="IPR019984">
    <property type="entry name" value="Ribosomal_uS17_bact/chlr"/>
</dbReference>
<dbReference type="InterPro" id="IPR019979">
    <property type="entry name" value="Ribosomal_uS17_CS"/>
</dbReference>
<dbReference type="NCBIfam" id="NF004123">
    <property type="entry name" value="PRK05610.1"/>
    <property type="match status" value="1"/>
</dbReference>
<dbReference type="NCBIfam" id="TIGR03635">
    <property type="entry name" value="uS17_bact"/>
    <property type="match status" value="1"/>
</dbReference>
<dbReference type="PANTHER" id="PTHR10744">
    <property type="entry name" value="40S RIBOSOMAL PROTEIN S11 FAMILY MEMBER"/>
    <property type="match status" value="1"/>
</dbReference>
<dbReference type="PANTHER" id="PTHR10744:SF1">
    <property type="entry name" value="SMALL RIBOSOMAL SUBUNIT PROTEIN US17M"/>
    <property type="match status" value="1"/>
</dbReference>
<dbReference type="Pfam" id="PF00366">
    <property type="entry name" value="Ribosomal_S17"/>
    <property type="match status" value="1"/>
</dbReference>
<dbReference type="PRINTS" id="PR00973">
    <property type="entry name" value="RIBOSOMALS17"/>
</dbReference>
<dbReference type="SUPFAM" id="SSF50249">
    <property type="entry name" value="Nucleic acid-binding proteins"/>
    <property type="match status" value="1"/>
</dbReference>
<dbReference type="PROSITE" id="PS00056">
    <property type="entry name" value="RIBOSOMAL_S17"/>
    <property type="match status" value="1"/>
</dbReference>
<feature type="chain" id="PRO_0000128471" description="Small ribosomal subunit protein uS17">
    <location>
        <begin position="1"/>
        <end position="135"/>
    </location>
</feature>
<feature type="region of interest" description="Disordered" evidence="2">
    <location>
        <begin position="1"/>
        <end position="59"/>
    </location>
</feature>
<feature type="compositionally biased region" description="Low complexity" evidence="2">
    <location>
        <begin position="8"/>
        <end position="42"/>
    </location>
</feature>
<feature type="compositionally biased region" description="Basic residues" evidence="2">
    <location>
        <begin position="43"/>
        <end position="59"/>
    </location>
</feature>
<evidence type="ECO:0000255" key="1">
    <source>
        <dbReference type="HAMAP-Rule" id="MF_01345"/>
    </source>
</evidence>
<evidence type="ECO:0000256" key="2">
    <source>
        <dbReference type="SAM" id="MobiDB-lite"/>
    </source>
</evidence>
<evidence type="ECO:0000305" key="3"/>
<accession>P9WH51</accession>
<accession>L0T692</accession>
<accession>P95058</accession>
<comment type="function">
    <text evidence="1">One of the primary rRNA binding proteins, it binds specifically to the 5'-end of 16S ribosomal RNA.</text>
</comment>
<comment type="subunit">
    <text evidence="1">Part of the 30S ribosomal subunit.</text>
</comment>
<comment type="miscellaneous">
    <text>Was identified as a high-confidence drug target.</text>
</comment>
<comment type="similarity">
    <text evidence="1">Belongs to the universal ribosomal protein uS17 family.</text>
</comment>
<comment type="sequence caution" evidence="3">
    <conflict type="erroneous initiation">
        <sequence resource="EMBL-CDS" id="CCP43454"/>
    </conflict>
    <text>Extended N-terminus.</text>
</comment>
<name>RS17_MYCTU</name>
<proteinExistence type="evidence at protein level"/>